<proteinExistence type="inferred from homology"/>
<protein>
    <recommendedName>
        <fullName evidence="1">FAD synthase</fullName>
        <ecNumber evidence="1">2.7.7.2</ecNumber>
    </recommendedName>
    <alternativeName>
        <fullName evidence="1">FMN adenylyltransferase</fullName>
    </alternativeName>
    <alternativeName>
        <fullName evidence="1">Flavin adenine dinucleotide synthase</fullName>
    </alternativeName>
</protein>
<keyword id="KW-0067">ATP-binding</keyword>
<keyword id="KW-0274">FAD</keyword>
<keyword id="KW-0285">Flavoprotein</keyword>
<keyword id="KW-0288">FMN</keyword>
<keyword id="KW-0547">Nucleotide-binding</keyword>
<keyword id="KW-0548">Nucleotidyltransferase</keyword>
<keyword id="KW-0808">Transferase</keyword>
<dbReference type="EC" id="2.7.7.2" evidence="1"/>
<dbReference type="EMBL" id="CP002009">
    <property type="protein sequence ID" value="ADG12722.1"/>
    <property type="molecule type" value="Genomic_DNA"/>
</dbReference>
<dbReference type="RefSeq" id="WP_013099468.1">
    <property type="nucleotide sequence ID" value="NC_014122.1"/>
</dbReference>
<dbReference type="SMR" id="D5VUB0"/>
<dbReference type="STRING" id="573063.Metin_0050"/>
<dbReference type="GeneID" id="9131049"/>
<dbReference type="KEGG" id="mif:Metin_0050"/>
<dbReference type="eggNOG" id="arCOG01222">
    <property type="taxonomic scope" value="Archaea"/>
</dbReference>
<dbReference type="HOGENOM" id="CLU_034585_2_1_2"/>
<dbReference type="OrthoDB" id="1912at2157"/>
<dbReference type="UniPathway" id="UPA00277">
    <property type="reaction ID" value="UER00407"/>
</dbReference>
<dbReference type="Proteomes" id="UP000002061">
    <property type="component" value="Chromosome"/>
</dbReference>
<dbReference type="GO" id="GO:0005524">
    <property type="term" value="F:ATP binding"/>
    <property type="evidence" value="ECO:0007669"/>
    <property type="project" value="UniProtKB-UniRule"/>
</dbReference>
<dbReference type="GO" id="GO:0003919">
    <property type="term" value="F:FMN adenylyltransferase activity"/>
    <property type="evidence" value="ECO:0007669"/>
    <property type="project" value="UniProtKB-UniRule"/>
</dbReference>
<dbReference type="GO" id="GO:0006747">
    <property type="term" value="P:FAD biosynthetic process"/>
    <property type="evidence" value="ECO:0007669"/>
    <property type="project" value="UniProtKB-UniRule"/>
</dbReference>
<dbReference type="GO" id="GO:0046444">
    <property type="term" value="P:FMN metabolic process"/>
    <property type="evidence" value="ECO:0007669"/>
    <property type="project" value="UniProtKB-UniRule"/>
</dbReference>
<dbReference type="CDD" id="cd02170">
    <property type="entry name" value="cytidylyltransferase"/>
    <property type="match status" value="1"/>
</dbReference>
<dbReference type="Gene3D" id="3.40.50.620">
    <property type="entry name" value="HUPs"/>
    <property type="match status" value="1"/>
</dbReference>
<dbReference type="HAMAP" id="MF_02115">
    <property type="entry name" value="FAD_synth_arch"/>
    <property type="match status" value="1"/>
</dbReference>
<dbReference type="InterPro" id="IPR050385">
    <property type="entry name" value="Archaeal_FAD_synthase"/>
</dbReference>
<dbReference type="InterPro" id="IPR004821">
    <property type="entry name" value="Cyt_trans-like"/>
</dbReference>
<dbReference type="InterPro" id="IPR024902">
    <property type="entry name" value="FAD_synth_RibL"/>
</dbReference>
<dbReference type="InterPro" id="IPR014729">
    <property type="entry name" value="Rossmann-like_a/b/a_fold"/>
</dbReference>
<dbReference type="NCBIfam" id="TIGR00125">
    <property type="entry name" value="cyt_tran_rel"/>
    <property type="match status" value="1"/>
</dbReference>
<dbReference type="PANTHER" id="PTHR43793">
    <property type="entry name" value="FAD SYNTHASE"/>
    <property type="match status" value="1"/>
</dbReference>
<dbReference type="PANTHER" id="PTHR43793:SF1">
    <property type="entry name" value="FAD SYNTHASE"/>
    <property type="match status" value="1"/>
</dbReference>
<dbReference type="Pfam" id="PF01467">
    <property type="entry name" value="CTP_transf_like"/>
    <property type="match status" value="1"/>
</dbReference>
<dbReference type="SUPFAM" id="SSF52374">
    <property type="entry name" value="Nucleotidylyl transferase"/>
    <property type="match status" value="1"/>
</dbReference>
<accession>D5VUB0</accession>
<gene>
    <name evidence="1" type="primary">ribL</name>
    <name type="ordered locus">Metin_0050</name>
</gene>
<reference key="1">
    <citation type="submission" date="2010-04" db="EMBL/GenBank/DDBJ databases">
        <title>Complete sequence of Methanocaldococcus infernus ME.</title>
        <authorList>
            <consortium name="US DOE Joint Genome Institute"/>
            <person name="Lucas S."/>
            <person name="Copeland A."/>
            <person name="Lapidus A."/>
            <person name="Cheng J.-F."/>
            <person name="Bruce D."/>
            <person name="Goodwin L."/>
            <person name="Pitluck S."/>
            <person name="Munk A.C."/>
            <person name="Detter J.C."/>
            <person name="Han C."/>
            <person name="Tapia R."/>
            <person name="Land M."/>
            <person name="Hauser L."/>
            <person name="Kyrpides N."/>
            <person name="Mikhailova N."/>
            <person name="Sieprawska-Lupa M."/>
            <person name="Whitman W.B."/>
            <person name="Woyke T."/>
        </authorList>
    </citation>
    <scope>NUCLEOTIDE SEQUENCE [LARGE SCALE GENOMIC DNA]</scope>
    <source>
        <strain>DSM 11812 / JCM 15783 / ME</strain>
    </source>
</reference>
<feature type="chain" id="PRO_0000406248" description="FAD synthase">
    <location>
        <begin position="1"/>
        <end position="145"/>
    </location>
</feature>
<feature type="binding site" evidence="1">
    <location>
        <begin position="9"/>
        <end position="10"/>
    </location>
    <ligand>
        <name>ATP</name>
        <dbReference type="ChEBI" id="CHEBI:30616"/>
    </ligand>
</feature>
<feature type="binding site" evidence="1">
    <location>
        <begin position="14"/>
        <end position="17"/>
    </location>
    <ligand>
        <name>ATP</name>
        <dbReference type="ChEBI" id="CHEBI:30616"/>
    </ligand>
</feature>
<feature type="binding site" evidence="1">
    <location>
        <position position="94"/>
    </location>
    <ligand>
        <name>ATP</name>
        <dbReference type="ChEBI" id="CHEBI:30616"/>
    </ligand>
</feature>
<feature type="binding site" evidence="1">
    <location>
        <position position="122"/>
    </location>
    <ligand>
        <name>ATP</name>
        <dbReference type="ChEBI" id="CHEBI:30616"/>
    </ligand>
</feature>
<comment type="function">
    <text evidence="1">Catalyzes the transfer of the AMP portion of ATP to flavin mononucleotide (FMN) to produce flavin adenine dinucleotide (FAD) coenzyme.</text>
</comment>
<comment type="catalytic activity">
    <reaction evidence="1">
        <text>FMN + ATP + H(+) = FAD + diphosphate</text>
        <dbReference type="Rhea" id="RHEA:17237"/>
        <dbReference type="ChEBI" id="CHEBI:15378"/>
        <dbReference type="ChEBI" id="CHEBI:30616"/>
        <dbReference type="ChEBI" id="CHEBI:33019"/>
        <dbReference type="ChEBI" id="CHEBI:57692"/>
        <dbReference type="ChEBI" id="CHEBI:58210"/>
        <dbReference type="EC" id="2.7.7.2"/>
    </reaction>
</comment>
<comment type="cofactor">
    <cofactor evidence="1">
        <name>a divalent metal cation</name>
        <dbReference type="ChEBI" id="CHEBI:60240"/>
    </cofactor>
</comment>
<comment type="pathway">
    <text evidence="1">Cofactor biosynthesis; FAD biosynthesis; FAD from FMN: step 1/1.</text>
</comment>
<comment type="subunit">
    <text evidence="1">Homodimer.</text>
</comment>
<comment type="similarity">
    <text evidence="1">Belongs to the archaeal FAD synthase family.</text>
</comment>
<sequence length="145" mass="16745">MKRVVAAGTFDILHPGHYEFLKFAKSLGDELIVIVARDKTVEKIKGRKPIIPEEQRRAMVEALKPVDKAILGSLNNKLEPIIELKPDIIVLGPDQRTFDEEELKRELKKYDLSPKIVRFNKYIKCPFHSSYDIVKEILKRYGGKE</sequence>
<evidence type="ECO:0000255" key="1">
    <source>
        <dbReference type="HAMAP-Rule" id="MF_02115"/>
    </source>
</evidence>
<name>RIBL_METIM</name>
<organism>
    <name type="scientific">Methanocaldococcus infernus (strain DSM 11812 / JCM 15783 / ME)</name>
    <dbReference type="NCBI Taxonomy" id="573063"/>
    <lineage>
        <taxon>Archaea</taxon>
        <taxon>Methanobacteriati</taxon>
        <taxon>Methanobacteriota</taxon>
        <taxon>Methanomada group</taxon>
        <taxon>Methanococci</taxon>
        <taxon>Methanococcales</taxon>
        <taxon>Methanocaldococcaceae</taxon>
        <taxon>Methanocaldococcus</taxon>
    </lineage>
</organism>